<evidence type="ECO:0000255" key="1">
    <source>
        <dbReference type="HAMAP-Rule" id="MF_00184"/>
    </source>
</evidence>
<evidence type="ECO:0000255" key="2">
    <source>
        <dbReference type="PROSITE-ProRule" id="PRU01228"/>
    </source>
</evidence>
<comment type="function">
    <text evidence="1">Catalyzes the attachment of threonine to tRNA(Thr) in a two-step reaction: L-threonine is first activated by ATP to form Thr-AMP and then transferred to the acceptor end of tRNA(Thr). Also edits incorrectly charged L-seryl-tRNA(Thr).</text>
</comment>
<comment type="catalytic activity">
    <reaction evidence="1">
        <text>tRNA(Thr) + L-threonine + ATP = L-threonyl-tRNA(Thr) + AMP + diphosphate + H(+)</text>
        <dbReference type="Rhea" id="RHEA:24624"/>
        <dbReference type="Rhea" id="RHEA-COMP:9670"/>
        <dbReference type="Rhea" id="RHEA-COMP:9704"/>
        <dbReference type="ChEBI" id="CHEBI:15378"/>
        <dbReference type="ChEBI" id="CHEBI:30616"/>
        <dbReference type="ChEBI" id="CHEBI:33019"/>
        <dbReference type="ChEBI" id="CHEBI:57926"/>
        <dbReference type="ChEBI" id="CHEBI:78442"/>
        <dbReference type="ChEBI" id="CHEBI:78534"/>
        <dbReference type="ChEBI" id="CHEBI:456215"/>
        <dbReference type="EC" id="6.1.1.3"/>
    </reaction>
</comment>
<comment type="cofactor">
    <cofactor evidence="1">
        <name>Zn(2+)</name>
        <dbReference type="ChEBI" id="CHEBI:29105"/>
    </cofactor>
    <text evidence="1">Binds 1 zinc ion per subunit.</text>
</comment>
<comment type="subunit">
    <text evidence="1">Homodimer.</text>
</comment>
<comment type="subcellular location">
    <subcellularLocation>
        <location evidence="1">Cytoplasm</location>
    </subcellularLocation>
</comment>
<comment type="similarity">
    <text evidence="1">Belongs to the class-II aminoacyl-tRNA synthetase family.</text>
</comment>
<feature type="chain" id="PRO_1000020401" description="Threonine--tRNA ligase">
    <location>
        <begin position="1"/>
        <end position="637"/>
    </location>
</feature>
<feature type="domain" description="TGS" evidence="2">
    <location>
        <begin position="1"/>
        <end position="61"/>
    </location>
</feature>
<feature type="region of interest" description="Catalytic" evidence="1">
    <location>
        <begin position="242"/>
        <end position="533"/>
    </location>
</feature>
<feature type="binding site" evidence="1">
    <location>
        <position position="333"/>
    </location>
    <ligand>
        <name>Zn(2+)</name>
        <dbReference type="ChEBI" id="CHEBI:29105"/>
    </ligand>
</feature>
<feature type="binding site" evidence="1">
    <location>
        <position position="384"/>
    </location>
    <ligand>
        <name>Zn(2+)</name>
        <dbReference type="ChEBI" id="CHEBI:29105"/>
    </ligand>
</feature>
<feature type="binding site" evidence="1">
    <location>
        <position position="510"/>
    </location>
    <ligand>
        <name>Zn(2+)</name>
        <dbReference type="ChEBI" id="CHEBI:29105"/>
    </ligand>
</feature>
<dbReference type="EC" id="6.1.1.3" evidence="1"/>
<dbReference type="EMBL" id="CP000155">
    <property type="protein sequence ID" value="ABC31282.1"/>
    <property type="molecule type" value="Genomic_DNA"/>
</dbReference>
<dbReference type="RefSeq" id="WP_011398347.1">
    <property type="nucleotide sequence ID" value="NC_007645.1"/>
</dbReference>
<dbReference type="SMR" id="Q2SDJ2"/>
<dbReference type="STRING" id="349521.HCH_04580"/>
<dbReference type="KEGG" id="hch:HCH_04580"/>
<dbReference type="eggNOG" id="COG0441">
    <property type="taxonomic scope" value="Bacteria"/>
</dbReference>
<dbReference type="HOGENOM" id="CLU_008554_0_1_6"/>
<dbReference type="OrthoDB" id="9802304at2"/>
<dbReference type="Proteomes" id="UP000000238">
    <property type="component" value="Chromosome"/>
</dbReference>
<dbReference type="GO" id="GO:0005829">
    <property type="term" value="C:cytosol"/>
    <property type="evidence" value="ECO:0007669"/>
    <property type="project" value="TreeGrafter"/>
</dbReference>
<dbReference type="GO" id="GO:0005524">
    <property type="term" value="F:ATP binding"/>
    <property type="evidence" value="ECO:0007669"/>
    <property type="project" value="UniProtKB-UniRule"/>
</dbReference>
<dbReference type="GO" id="GO:0046872">
    <property type="term" value="F:metal ion binding"/>
    <property type="evidence" value="ECO:0007669"/>
    <property type="project" value="UniProtKB-KW"/>
</dbReference>
<dbReference type="GO" id="GO:0004829">
    <property type="term" value="F:threonine-tRNA ligase activity"/>
    <property type="evidence" value="ECO:0007669"/>
    <property type="project" value="UniProtKB-UniRule"/>
</dbReference>
<dbReference type="GO" id="GO:0000049">
    <property type="term" value="F:tRNA binding"/>
    <property type="evidence" value="ECO:0007669"/>
    <property type="project" value="UniProtKB-KW"/>
</dbReference>
<dbReference type="GO" id="GO:0006435">
    <property type="term" value="P:threonyl-tRNA aminoacylation"/>
    <property type="evidence" value="ECO:0007669"/>
    <property type="project" value="UniProtKB-UniRule"/>
</dbReference>
<dbReference type="CDD" id="cd01667">
    <property type="entry name" value="TGS_ThrRS"/>
    <property type="match status" value="1"/>
</dbReference>
<dbReference type="CDD" id="cd00860">
    <property type="entry name" value="ThrRS_anticodon"/>
    <property type="match status" value="1"/>
</dbReference>
<dbReference type="CDD" id="cd00771">
    <property type="entry name" value="ThrRS_core"/>
    <property type="match status" value="1"/>
</dbReference>
<dbReference type="FunFam" id="3.10.20.30:FF:000005">
    <property type="entry name" value="Threonine--tRNA ligase"/>
    <property type="match status" value="1"/>
</dbReference>
<dbReference type="FunFam" id="3.30.54.20:FF:000002">
    <property type="entry name" value="Threonine--tRNA ligase"/>
    <property type="match status" value="1"/>
</dbReference>
<dbReference type="FunFam" id="3.30.930.10:FF:000002">
    <property type="entry name" value="Threonine--tRNA ligase"/>
    <property type="match status" value="1"/>
</dbReference>
<dbReference type="FunFam" id="3.40.50.800:FF:000001">
    <property type="entry name" value="Threonine--tRNA ligase"/>
    <property type="match status" value="1"/>
</dbReference>
<dbReference type="FunFam" id="3.30.980.10:FF:000005">
    <property type="entry name" value="Threonyl-tRNA synthetase, mitochondrial"/>
    <property type="match status" value="1"/>
</dbReference>
<dbReference type="Gene3D" id="3.10.20.30">
    <property type="match status" value="1"/>
</dbReference>
<dbReference type="Gene3D" id="3.30.54.20">
    <property type="match status" value="1"/>
</dbReference>
<dbReference type="Gene3D" id="3.40.50.800">
    <property type="entry name" value="Anticodon-binding domain"/>
    <property type="match status" value="1"/>
</dbReference>
<dbReference type="Gene3D" id="3.30.930.10">
    <property type="entry name" value="Bira Bifunctional Protein, Domain 2"/>
    <property type="match status" value="1"/>
</dbReference>
<dbReference type="Gene3D" id="3.30.980.10">
    <property type="entry name" value="Threonyl-trna Synthetase, Chain A, domain 2"/>
    <property type="match status" value="1"/>
</dbReference>
<dbReference type="HAMAP" id="MF_00184">
    <property type="entry name" value="Thr_tRNA_synth"/>
    <property type="match status" value="1"/>
</dbReference>
<dbReference type="InterPro" id="IPR002314">
    <property type="entry name" value="aa-tRNA-synt_IIb"/>
</dbReference>
<dbReference type="InterPro" id="IPR006195">
    <property type="entry name" value="aa-tRNA-synth_II"/>
</dbReference>
<dbReference type="InterPro" id="IPR045864">
    <property type="entry name" value="aa-tRNA-synth_II/BPL/LPL"/>
</dbReference>
<dbReference type="InterPro" id="IPR004154">
    <property type="entry name" value="Anticodon-bd"/>
</dbReference>
<dbReference type="InterPro" id="IPR036621">
    <property type="entry name" value="Anticodon-bd_dom_sf"/>
</dbReference>
<dbReference type="InterPro" id="IPR012675">
    <property type="entry name" value="Beta-grasp_dom_sf"/>
</dbReference>
<dbReference type="InterPro" id="IPR004095">
    <property type="entry name" value="TGS"/>
</dbReference>
<dbReference type="InterPro" id="IPR012676">
    <property type="entry name" value="TGS-like"/>
</dbReference>
<dbReference type="InterPro" id="IPR002320">
    <property type="entry name" value="Thr-tRNA-ligase_IIa"/>
</dbReference>
<dbReference type="InterPro" id="IPR018163">
    <property type="entry name" value="Thr/Ala-tRNA-synth_IIc_edit"/>
</dbReference>
<dbReference type="InterPro" id="IPR047246">
    <property type="entry name" value="ThrRS_anticodon"/>
</dbReference>
<dbReference type="InterPro" id="IPR033728">
    <property type="entry name" value="ThrRS_core"/>
</dbReference>
<dbReference type="InterPro" id="IPR012947">
    <property type="entry name" value="tRNA_SAD"/>
</dbReference>
<dbReference type="NCBIfam" id="TIGR00418">
    <property type="entry name" value="thrS"/>
    <property type="match status" value="1"/>
</dbReference>
<dbReference type="PANTHER" id="PTHR11451:SF44">
    <property type="entry name" value="THREONINE--TRNA LIGASE, CHLOROPLASTIC_MITOCHONDRIAL 2"/>
    <property type="match status" value="1"/>
</dbReference>
<dbReference type="PANTHER" id="PTHR11451">
    <property type="entry name" value="THREONINE-TRNA LIGASE"/>
    <property type="match status" value="1"/>
</dbReference>
<dbReference type="Pfam" id="PF03129">
    <property type="entry name" value="HGTP_anticodon"/>
    <property type="match status" value="1"/>
</dbReference>
<dbReference type="Pfam" id="PF02824">
    <property type="entry name" value="TGS"/>
    <property type="match status" value="1"/>
</dbReference>
<dbReference type="Pfam" id="PF00587">
    <property type="entry name" value="tRNA-synt_2b"/>
    <property type="match status" value="1"/>
</dbReference>
<dbReference type="Pfam" id="PF07973">
    <property type="entry name" value="tRNA_SAD"/>
    <property type="match status" value="1"/>
</dbReference>
<dbReference type="PRINTS" id="PR01047">
    <property type="entry name" value="TRNASYNTHTHR"/>
</dbReference>
<dbReference type="SMART" id="SM00863">
    <property type="entry name" value="tRNA_SAD"/>
    <property type="match status" value="1"/>
</dbReference>
<dbReference type="SUPFAM" id="SSF52954">
    <property type="entry name" value="Class II aaRS ABD-related"/>
    <property type="match status" value="1"/>
</dbReference>
<dbReference type="SUPFAM" id="SSF55681">
    <property type="entry name" value="Class II aaRS and biotin synthetases"/>
    <property type="match status" value="1"/>
</dbReference>
<dbReference type="SUPFAM" id="SSF81271">
    <property type="entry name" value="TGS-like"/>
    <property type="match status" value="1"/>
</dbReference>
<dbReference type="SUPFAM" id="SSF55186">
    <property type="entry name" value="ThrRS/AlaRS common domain"/>
    <property type="match status" value="1"/>
</dbReference>
<dbReference type="PROSITE" id="PS50862">
    <property type="entry name" value="AA_TRNA_LIGASE_II"/>
    <property type="match status" value="1"/>
</dbReference>
<dbReference type="PROSITE" id="PS51880">
    <property type="entry name" value="TGS"/>
    <property type="match status" value="1"/>
</dbReference>
<sequence>MPVITLPDGSKREFSNPVTVLDVAADIGPGLAKAAVAGKVDGTLVDCSHVIDKDAELAIVTERDAEGVEVIRHSSAHLLAMAVQSIFPSAQVTIGPVIEDGFYYDFAFERPFTPDDLVKIEEKMQELSDADLPVTRSLMSRSEAVELFKKMGEEYKVEIIASIPTEENLSFYSQGDFIDLCRGPHVPSTGKIKAFKLTKVAGAYWRGDSNNAMLQRIYGTAWGNKKDLKAYLHRIEEAEKRDHRKIGKKLGLFHMQEEAPGMVFWHSDGWTLYQVIEQYMRKQLRKHDYKEIKTPQVVERTLWEKSGHWEKFRDDMFTTQSEDRDFAIKPMNCPCHVQVFNQGLRSYRDLPLRLAEFGSCHRNEASGALHGLMRVRGFTQDDAHIFCTEEQIQEEVGKFIDFLHEVYADFGFSEIIYKLSTRPEKRVGSDEIWDKSEKALADALDAKGLPWEELPGEGAFYGPKVEFSLKDCLGRLWQCGTVQVDFSMPGRLGAQYVSDEQVRKTPVMLHRAILGSFERFIGILIEHYEGAFPSWLAPTQVAILNITDKQADYCKKIGEILNDKGFRVRLDLRNEKINYKIREHTLNRVPFLAVVGDKEVETQCLAIRTRQGEDLGVMSISAFEELLQNEEAKRSRS</sequence>
<protein>
    <recommendedName>
        <fullName evidence="1">Threonine--tRNA ligase</fullName>
        <ecNumber evidence="1">6.1.1.3</ecNumber>
    </recommendedName>
    <alternativeName>
        <fullName evidence="1">Threonyl-tRNA synthetase</fullName>
        <shortName evidence="1">ThrRS</shortName>
    </alternativeName>
</protein>
<gene>
    <name evidence="1" type="primary">thrS</name>
    <name type="ordered locus">HCH_04580</name>
</gene>
<keyword id="KW-0030">Aminoacyl-tRNA synthetase</keyword>
<keyword id="KW-0067">ATP-binding</keyword>
<keyword id="KW-0963">Cytoplasm</keyword>
<keyword id="KW-0436">Ligase</keyword>
<keyword id="KW-0479">Metal-binding</keyword>
<keyword id="KW-0547">Nucleotide-binding</keyword>
<keyword id="KW-0648">Protein biosynthesis</keyword>
<keyword id="KW-1185">Reference proteome</keyword>
<keyword id="KW-0694">RNA-binding</keyword>
<keyword id="KW-0820">tRNA-binding</keyword>
<keyword id="KW-0862">Zinc</keyword>
<proteinExistence type="inferred from homology"/>
<reference key="1">
    <citation type="journal article" date="2005" name="Nucleic Acids Res.">
        <title>Genomic blueprint of Hahella chejuensis, a marine microbe producing an algicidal agent.</title>
        <authorList>
            <person name="Jeong H."/>
            <person name="Yim J.H."/>
            <person name="Lee C."/>
            <person name="Choi S.-H."/>
            <person name="Park Y.K."/>
            <person name="Yoon S.H."/>
            <person name="Hur C.-G."/>
            <person name="Kang H.-Y."/>
            <person name="Kim D."/>
            <person name="Lee H.H."/>
            <person name="Park K.H."/>
            <person name="Park S.-H."/>
            <person name="Park H.-S."/>
            <person name="Lee H.K."/>
            <person name="Oh T.K."/>
            <person name="Kim J.F."/>
        </authorList>
    </citation>
    <scope>NUCLEOTIDE SEQUENCE [LARGE SCALE GENOMIC DNA]</scope>
    <source>
        <strain>KCTC 2396</strain>
    </source>
</reference>
<name>SYT_HAHCH</name>
<organism>
    <name type="scientific">Hahella chejuensis (strain KCTC 2396)</name>
    <dbReference type="NCBI Taxonomy" id="349521"/>
    <lineage>
        <taxon>Bacteria</taxon>
        <taxon>Pseudomonadati</taxon>
        <taxon>Pseudomonadota</taxon>
        <taxon>Gammaproteobacteria</taxon>
        <taxon>Oceanospirillales</taxon>
        <taxon>Hahellaceae</taxon>
        <taxon>Hahella</taxon>
    </lineage>
</organism>
<accession>Q2SDJ2</accession>